<organism>
    <name type="scientific">Yersinia pseudotuberculosis serotype O:3 (strain YPIII)</name>
    <dbReference type="NCBI Taxonomy" id="502800"/>
    <lineage>
        <taxon>Bacteria</taxon>
        <taxon>Pseudomonadati</taxon>
        <taxon>Pseudomonadota</taxon>
        <taxon>Gammaproteobacteria</taxon>
        <taxon>Enterobacterales</taxon>
        <taxon>Yersiniaceae</taxon>
        <taxon>Yersinia</taxon>
    </lineage>
</organism>
<feature type="chain" id="PRO_1000097135" description="Pantothenate synthetase">
    <location>
        <begin position="1"/>
        <end position="284"/>
    </location>
</feature>
<feature type="active site" description="Proton donor" evidence="1">
    <location>
        <position position="37"/>
    </location>
</feature>
<feature type="binding site" evidence="1">
    <location>
        <begin position="30"/>
        <end position="37"/>
    </location>
    <ligand>
        <name>ATP</name>
        <dbReference type="ChEBI" id="CHEBI:30616"/>
    </ligand>
</feature>
<feature type="binding site" evidence="1">
    <location>
        <position position="61"/>
    </location>
    <ligand>
        <name>(R)-pantoate</name>
        <dbReference type="ChEBI" id="CHEBI:15980"/>
    </ligand>
</feature>
<feature type="binding site" evidence="1">
    <location>
        <position position="61"/>
    </location>
    <ligand>
        <name>beta-alanine</name>
        <dbReference type="ChEBI" id="CHEBI:57966"/>
    </ligand>
</feature>
<feature type="binding site" evidence="1">
    <location>
        <begin position="149"/>
        <end position="152"/>
    </location>
    <ligand>
        <name>ATP</name>
        <dbReference type="ChEBI" id="CHEBI:30616"/>
    </ligand>
</feature>
<feature type="binding site" evidence="1">
    <location>
        <position position="155"/>
    </location>
    <ligand>
        <name>(R)-pantoate</name>
        <dbReference type="ChEBI" id="CHEBI:15980"/>
    </ligand>
</feature>
<feature type="binding site" evidence="1">
    <location>
        <position position="178"/>
    </location>
    <ligand>
        <name>ATP</name>
        <dbReference type="ChEBI" id="CHEBI:30616"/>
    </ligand>
</feature>
<feature type="binding site" evidence="1">
    <location>
        <begin position="186"/>
        <end position="189"/>
    </location>
    <ligand>
        <name>ATP</name>
        <dbReference type="ChEBI" id="CHEBI:30616"/>
    </ligand>
</feature>
<name>PANC_YERPY</name>
<sequence length="284" mass="31730">MLIIETLPLLRQQIRRWRQEGKRIALVPTMGNLHEGHMTLVDEAKTRADVVVVTIFVNPLQFERPDDLAHYPRTLQEDCEKLTRHGADLVFAPAAADIYPAGLEKQTYVDVPALSTILEGASRPGHFRGVSTIVSKLFNLIQPDVACFGEKDYQQLALIRKMVADMGYDINIVGVPTVRAKDGLALSSRNGYLTEEERQIAPQLSKIMWALAEKMALGERQIDALLEDAAAQLLRAGFTPDELFIRDAETLQPLTVDSQQAVILMAAWLGKARLIDNQLVDLRH</sequence>
<reference key="1">
    <citation type="submission" date="2008-02" db="EMBL/GenBank/DDBJ databases">
        <title>Complete sequence of Yersinia pseudotuberculosis YPIII.</title>
        <authorList>
            <consortium name="US DOE Joint Genome Institute"/>
            <person name="Copeland A."/>
            <person name="Lucas S."/>
            <person name="Lapidus A."/>
            <person name="Glavina del Rio T."/>
            <person name="Dalin E."/>
            <person name="Tice H."/>
            <person name="Bruce D."/>
            <person name="Goodwin L."/>
            <person name="Pitluck S."/>
            <person name="Munk A.C."/>
            <person name="Brettin T."/>
            <person name="Detter J.C."/>
            <person name="Han C."/>
            <person name="Tapia R."/>
            <person name="Schmutz J."/>
            <person name="Larimer F."/>
            <person name="Land M."/>
            <person name="Hauser L."/>
            <person name="Challacombe J.F."/>
            <person name="Green L."/>
            <person name="Lindler L.E."/>
            <person name="Nikolich M.P."/>
            <person name="Richardson P."/>
        </authorList>
    </citation>
    <scope>NUCLEOTIDE SEQUENCE [LARGE SCALE GENOMIC DNA]</scope>
    <source>
        <strain>YPIII</strain>
    </source>
</reference>
<comment type="function">
    <text evidence="1">Catalyzes the condensation of pantoate with beta-alanine in an ATP-dependent reaction via a pantoyl-adenylate intermediate.</text>
</comment>
<comment type="catalytic activity">
    <reaction evidence="1">
        <text>(R)-pantoate + beta-alanine + ATP = (R)-pantothenate + AMP + diphosphate + H(+)</text>
        <dbReference type="Rhea" id="RHEA:10912"/>
        <dbReference type="ChEBI" id="CHEBI:15378"/>
        <dbReference type="ChEBI" id="CHEBI:15980"/>
        <dbReference type="ChEBI" id="CHEBI:29032"/>
        <dbReference type="ChEBI" id="CHEBI:30616"/>
        <dbReference type="ChEBI" id="CHEBI:33019"/>
        <dbReference type="ChEBI" id="CHEBI:57966"/>
        <dbReference type="ChEBI" id="CHEBI:456215"/>
        <dbReference type="EC" id="6.3.2.1"/>
    </reaction>
</comment>
<comment type="pathway">
    <text evidence="1">Cofactor biosynthesis; (R)-pantothenate biosynthesis; (R)-pantothenate from (R)-pantoate and beta-alanine: step 1/1.</text>
</comment>
<comment type="subunit">
    <text evidence="1">Homodimer.</text>
</comment>
<comment type="subcellular location">
    <subcellularLocation>
        <location evidence="1">Cytoplasm</location>
    </subcellularLocation>
</comment>
<comment type="miscellaneous">
    <text evidence="1">The reaction proceeds by a bi uni uni bi ping pong mechanism.</text>
</comment>
<comment type="similarity">
    <text evidence="1">Belongs to the pantothenate synthetase family.</text>
</comment>
<gene>
    <name evidence="1" type="primary">panC</name>
    <name type="ordered locus">YPK_3473</name>
</gene>
<evidence type="ECO:0000255" key="1">
    <source>
        <dbReference type="HAMAP-Rule" id="MF_00158"/>
    </source>
</evidence>
<accession>B1JK36</accession>
<keyword id="KW-0067">ATP-binding</keyword>
<keyword id="KW-0963">Cytoplasm</keyword>
<keyword id="KW-0436">Ligase</keyword>
<keyword id="KW-0547">Nucleotide-binding</keyword>
<keyword id="KW-0566">Pantothenate biosynthesis</keyword>
<proteinExistence type="inferred from homology"/>
<protein>
    <recommendedName>
        <fullName evidence="1">Pantothenate synthetase</fullName>
        <shortName evidence="1">PS</shortName>
        <ecNumber evidence="1">6.3.2.1</ecNumber>
    </recommendedName>
    <alternativeName>
        <fullName evidence="1">Pantoate--beta-alanine ligase</fullName>
    </alternativeName>
    <alternativeName>
        <fullName evidence="1">Pantoate-activating enzyme</fullName>
    </alternativeName>
</protein>
<dbReference type="EC" id="6.3.2.1" evidence="1"/>
<dbReference type="EMBL" id="CP000950">
    <property type="protein sequence ID" value="ACA69740.1"/>
    <property type="molecule type" value="Genomic_DNA"/>
</dbReference>
<dbReference type="RefSeq" id="WP_011191752.1">
    <property type="nucleotide sequence ID" value="NZ_CP009792.1"/>
</dbReference>
<dbReference type="SMR" id="B1JK36"/>
<dbReference type="GeneID" id="49787266"/>
<dbReference type="KEGG" id="ypy:YPK_3473"/>
<dbReference type="PATRIC" id="fig|502800.11.peg.4214"/>
<dbReference type="UniPathway" id="UPA00028">
    <property type="reaction ID" value="UER00005"/>
</dbReference>
<dbReference type="GO" id="GO:0005829">
    <property type="term" value="C:cytosol"/>
    <property type="evidence" value="ECO:0007669"/>
    <property type="project" value="TreeGrafter"/>
</dbReference>
<dbReference type="GO" id="GO:0005524">
    <property type="term" value="F:ATP binding"/>
    <property type="evidence" value="ECO:0007669"/>
    <property type="project" value="UniProtKB-KW"/>
</dbReference>
<dbReference type="GO" id="GO:0004592">
    <property type="term" value="F:pantoate-beta-alanine ligase activity"/>
    <property type="evidence" value="ECO:0007669"/>
    <property type="project" value="UniProtKB-UniRule"/>
</dbReference>
<dbReference type="GO" id="GO:0015940">
    <property type="term" value="P:pantothenate biosynthetic process"/>
    <property type="evidence" value="ECO:0007669"/>
    <property type="project" value="UniProtKB-UniRule"/>
</dbReference>
<dbReference type="CDD" id="cd00560">
    <property type="entry name" value="PanC"/>
    <property type="match status" value="1"/>
</dbReference>
<dbReference type="FunFam" id="3.30.1300.10:FF:000001">
    <property type="entry name" value="Pantothenate synthetase"/>
    <property type="match status" value="1"/>
</dbReference>
<dbReference type="FunFam" id="3.40.50.620:FF:000013">
    <property type="entry name" value="Pantothenate synthetase"/>
    <property type="match status" value="1"/>
</dbReference>
<dbReference type="Gene3D" id="3.40.50.620">
    <property type="entry name" value="HUPs"/>
    <property type="match status" value="1"/>
</dbReference>
<dbReference type="Gene3D" id="3.30.1300.10">
    <property type="entry name" value="Pantoate-beta-alanine ligase, C-terminal domain"/>
    <property type="match status" value="1"/>
</dbReference>
<dbReference type="HAMAP" id="MF_00158">
    <property type="entry name" value="PanC"/>
    <property type="match status" value="1"/>
</dbReference>
<dbReference type="InterPro" id="IPR003721">
    <property type="entry name" value="Pantoate_ligase"/>
</dbReference>
<dbReference type="InterPro" id="IPR042176">
    <property type="entry name" value="Pantoate_ligase_C"/>
</dbReference>
<dbReference type="InterPro" id="IPR014729">
    <property type="entry name" value="Rossmann-like_a/b/a_fold"/>
</dbReference>
<dbReference type="NCBIfam" id="TIGR00018">
    <property type="entry name" value="panC"/>
    <property type="match status" value="1"/>
</dbReference>
<dbReference type="PANTHER" id="PTHR21299">
    <property type="entry name" value="CYTIDYLATE KINASE/PANTOATE-BETA-ALANINE LIGASE"/>
    <property type="match status" value="1"/>
</dbReference>
<dbReference type="PANTHER" id="PTHR21299:SF1">
    <property type="entry name" value="PANTOATE--BETA-ALANINE LIGASE"/>
    <property type="match status" value="1"/>
</dbReference>
<dbReference type="Pfam" id="PF02569">
    <property type="entry name" value="Pantoate_ligase"/>
    <property type="match status" value="1"/>
</dbReference>
<dbReference type="SUPFAM" id="SSF52374">
    <property type="entry name" value="Nucleotidylyl transferase"/>
    <property type="match status" value="1"/>
</dbReference>